<feature type="chain" id="PRO_0000101744" description="Potassium channel subfamily K member 3">
    <location>
        <begin position="1"/>
        <end position="394"/>
    </location>
</feature>
<feature type="topological domain" description="Cytoplasmic" evidence="4">
    <location>
        <begin position="1"/>
        <end position="8"/>
    </location>
</feature>
<feature type="transmembrane region" description="Helical" evidence="4">
    <location>
        <begin position="9"/>
        <end position="29"/>
    </location>
</feature>
<feature type="intramembrane region" description="Pore-forming; Name=Pore-forming 1" evidence="4">
    <location>
        <begin position="78"/>
        <end position="101"/>
    </location>
</feature>
<feature type="transmembrane region" description="Helical" evidence="4">
    <location>
        <begin position="108"/>
        <end position="128"/>
    </location>
</feature>
<feature type="topological domain" description="Cytoplasmic" evidence="4">
    <location>
        <begin position="129"/>
        <end position="158"/>
    </location>
</feature>
<feature type="transmembrane region" description="Helical" evidence="4">
    <location>
        <begin position="159"/>
        <end position="179"/>
    </location>
</feature>
<feature type="intramembrane region" description="Pore-forming; Name=Pore-forming 2" evidence="4">
    <location>
        <begin position="184"/>
        <end position="207"/>
    </location>
</feature>
<feature type="transmembrane region" description="Helical" evidence="4">
    <location>
        <begin position="223"/>
        <end position="243"/>
    </location>
</feature>
<feature type="topological domain" description="Cytoplasmic" evidence="4">
    <location>
        <begin position="244"/>
        <end position="394"/>
    </location>
</feature>
<feature type="region of interest" description="Selectivity filter 1" evidence="17">
    <location>
        <begin position="93"/>
        <end position="98"/>
    </location>
</feature>
<feature type="region of interest" description="Selectivity filter 2" evidence="17">
    <location>
        <begin position="199"/>
        <end position="204"/>
    </location>
</feature>
<feature type="region of interest" description="X-gate" evidence="12">
    <location>
        <begin position="243"/>
        <end position="248"/>
    </location>
</feature>
<feature type="region of interest" description="Disordered" evidence="5">
    <location>
        <begin position="266"/>
        <end position="286"/>
    </location>
</feature>
<feature type="region of interest" description="Disordered" evidence="5">
    <location>
        <begin position="338"/>
        <end position="357"/>
    </location>
</feature>
<feature type="compositionally biased region" description="Gly residues" evidence="5">
    <location>
        <begin position="269"/>
        <end position="278"/>
    </location>
</feature>
<feature type="binding site" evidence="3">
    <location>
        <position position="93"/>
    </location>
    <ligand>
        <name>K(+)</name>
        <dbReference type="ChEBI" id="CHEBI:29103"/>
        <label>1</label>
    </ligand>
</feature>
<feature type="binding site" evidence="3">
    <location>
        <position position="93"/>
    </location>
    <ligand>
        <name>K(+)</name>
        <dbReference type="ChEBI" id="CHEBI:29103"/>
        <label>4</label>
    </ligand>
</feature>
<feature type="binding site" evidence="3">
    <location>
        <position position="94"/>
    </location>
    <ligand>
        <name>K(+)</name>
        <dbReference type="ChEBI" id="CHEBI:29103"/>
        <label>1</label>
    </ligand>
</feature>
<feature type="binding site" evidence="12 19 20">
    <location>
        <position position="94"/>
    </location>
    <ligand>
        <name>K(+)</name>
        <dbReference type="ChEBI" id="CHEBI:29103"/>
        <label>2</label>
    </ligand>
</feature>
<feature type="binding site" evidence="12 19 20">
    <location>
        <position position="95"/>
    </location>
    <ligand>
        <name>K(+)</name>
        <dbReference type="ChEBI" id="CHEBI:29103"/>
        <label>2</label>
    </ligand>
</feature>
<feature type="binding site" evidence="3">
    <location>
        <position position="95"/>
    </location>
    <ligand>
        <name>K(+)</name>
        <dbReference type="ChEBI" id="CHEBI:29103"/>
        <label>3</label>
    </ligand>
</feature>
<feature type="binding site" evidence="3">
    <location>
        <position position="96"/>
    </location>
    <ligand>
        <name>K(+)</name>
        <dbReference type="ChEBI" id="CHEBI:29103"/>
        <label>3</label>
    </ligand>
</feature>
<feature type="binding site" evidence="3">
    <location>
        <position position="199"/>
    </location>
    <ligand>
        <name>K(+)</name>
        <dbReference type="ChEBI" id="CHEBI:29103"/>
        <label>1</label>
    </ligand>
</feature>
<feature type="binding site" evidence="3">
    <location>
        <position position="199"/>
    </location>
    <ligand>
        <name>K(+)</name>
        <dbReference type="ChEBI" id="CHEBI:29103"/>
        <label>4</label>
    </ligand>
</feature>
<feature type="binding site" evidence="3">
    <location>
        <position position="200"/>
    </location>
    <ligand>
        <name>K(+)</name>
        <dbReference type="ChEBI" id="CHEBI:29103"/>
        <label>1</label>
    </ligand>
</feature>
<feature type="binding site" evidence="12 19 20">
    <location>
        <position position="200"/>
    </location>
    <ligand>
        <name>K(+)</name>
        <dbReference type="ChEBI" id="CHEBI:29103"/>
        <label>2</label>
    </ligand>
</feature>
<feature type="binding site" evidence="12 19 20">
    <location>
        <position position="201"/>
    </location>
    <ligand>
        <name>K(+)</name>
        <dbReference type="ChEBI" id="CHEBI:29103"/>
        <label>2</label>
    </ligand>
</feature>
<feature type="binding site" evidence="3">
    <location>
        <position position="201"/>
    </location>
    <ligand>
        <name>K(+)</name>
        <dbReference type="ChEBI" id="CHEBI:29103"/>
        <label>3</label>
    </ligand>
</feature>
<feature type="binding site" evidence="3">
    <location>
        <position position="202"/>
    </location>
    <ligand>
        <name>K(+)</name>
        <dbReference type="ChEBI" id="CHEBI:29103"/>
        <label>3</label>
    </ligand>
</feature>
<feature type="glycosylation site" description="N-linked (GlcNAc...) asparagine" evidence="4">
    <location>
        <position position="53"/>
    </location>
</feature>
<feature type="sequence variant" id="VAR_070126" description="In PPH4; loss of function; channel activity can be rescued with the use of the phospholipase A2 inhibitor ONO-RS-082; dbSNP:rs1085307438." evidence="10">
    <original>T</original>
    <variation>K</variation>
    <location>
        <position position="8"/>
    </location>
</feature>
<feature type="sequence variant" id="VAR_070127" description="In PPH4; loss of function; dbSNP:rs398123040." evidence="10">
    <original>G</original>
    <variation>R</variation>
    <location>
        <position position="97"/>
    </location>
</feature>
<feature type="sequence variant" id="VAR_089851" description="Found in a patient with DDSA; de novo; gain of function; increases channel open probability; results in increased potassium currents for homo- and heterodimeric KCNK3:KCNK9 channels; impairs G-protein coupled receptor-mediated inhibition; does not affect pH dependence; dbSNP:rs1553387422." evidence="13">
    <original>L</original>
    <variation>P</variation>
    <location>
        <position position="122"/>
    </location>
</feature>
<feature type="sequence variant" id="VAR_089852" description="Found in a patient with DDSA; de novo; gain of function; increases channel open probability; results in increased potassium currents for homo- and heterodimeric KCNK3:KCNK9 channels; impairs G-protein coupled receptor-mediated inhibition; does not affect pH dependence." evidence="13">
    <original>L</original>
    <variation>V</variation>
    <location>
        <position position="122"/>
    </location>
</feature>
<feature type="sequence variant" id="VAR_089853" description="Found in two patients with DDSA; de novo; gain of function; increases channel open probability and single channel conductance; results in increased potassium currents for homo- and heterodimeric KCNK3:KCNK9 channels; impairs G-protein coupled receptor-mediated inhibition; does not affect pH dependence; dbSNP:rs2148038286." evidence="13">
    <original>G</original>
    <variation>D</variation>
    <location>
        <position position="129"/>
    </location>
</feature>
<feature type="sequence variant" id="VAR_089854" description="Found in three patients with DDSA; de novo; gain of function; increases channel open probability; results in increased potassium currents for homo- and heterodimeric KCNK3:KCNK9 channels; impairs G-protein coupled receptor-mediated inhibition; impairs the inhibitory effects of diacylglycerol and anandamide; does not affect pH dependence; dbSNP:rs1663450536." evidence="13">
    <original>N</original>
    <variation>S</variation>
    <location>
        <position position="133"/>
    </location>
</feature>
<feature type="sequence variant" id="VAR_089855" description="Does not affect channel potassium conductance; dbSNP:rs151228365." evidence="13">
    <original>H</original>
    <variation>Q</variation>
    <location>
        <position position="141"/>
    </location>
</feature>
<feature type="sequence variant" id="VAR_070128" description="In PPH4; loss of function; channel activity can be rescued with the use of the phospholipase A2 inhibitor ONO-RS-082; dbSNP:rs398123042." evidence="10">
    <original>E</original>
    <variation>K</variation>
    <location>
        <position position="182"/>
    </location>
</feature>
<feature type="sequence variant" id="VAR_070129" description="In PPH4; loss of function; dbSNP:rs398123043." evidence="10">
    <original>Y</original>
    <variation>C</variation>
    <location>
        <position position="192"/>
    </location>
</feature>
<feature type="sequence variant" id="VAR_070130" description="In PPH4; loss of function; channel activity cannot be rescued with the use of the phospholipase A2 inhibitor ONO-RS-082; dbSNP:rs398123039." evidence="10">
    <original>G</original>
    <variation>D</variation>
    <location>
        <position position="203"/>
    </location>
</feature>
<feature type="sequence variant" id="VAR_070131" description="In PPH4; loss of function; dbSNP:rs398123041." evidence="10">
    <original>V</original>
    <variation>L</variation>
    <location>
        <position position="221"/>
    </location>
</feature>
<feature type="sequence variant" id="VAR_089856" description="Found in a patient with DDSA; de novo; gain of function; increases channel open probability; results in increased potassium currents for heterodimeric KCNK3:KCNK9 channels; does not affect potassium currents for homodimers; impairs G-protein coupled receptor-mediated inhibition; does not affect pH dependence; dbSNP:rs2148038555." evidence="13">
    <original>L</original>
    <variation>P</variation>
    <location>
        <position position="239"/>
    </location>
</feature>
<feature type="sequence variant" id="VAR_089857" description="Found in a patient with DDSA; de novo; gain of function; increases channel open probability; results in increased potassium currents for homo- and heterodimeric KCNK3:KCNK9 channels; impairs G-protein coupled receptor-mediated inhibition; does not affect pH dependence; dbSNP:rs2148038557." evidence="13">
    <original>L</original>
    <variation>F</variation>
    <location>
        <position position="241"/>
    </location>
</feature>
<feature type="mutagenesis site" description="Increases potassium current amplitude." evidence="12">
    <original>Q</original>
    <variation>C</variation>
    <location>
        <position position="4"/>
    </location>
</feature>
<feature type="mutagenesis site" description="Increases potassium current amplitude." evidence="12">
    <original>N</original>
    <variation>C</variation>
    <location>
        <position position="5"/>
    </location>
</feature>
<feature type="mutagenesis site" description="No effect on channel basal activity." evidence="12">
    <original>V</original>
    <variation>C</variation>
    <location>
        <position position="6"/>
    </location>
</feature>
<feature type="mutagenesis site" description="Increases potassium current amplitude." evidence="12">
    <original>R</original>
    <variation>C</variation>
    <variation>D</variation>
    <variation>E</variation>
    <location>
        <position position="7"/>
    </location>
</feature>
<feature type="mutagenesis site" description="No effect on channel basal activity." evidence="12">
    <original>R</original>
    <variation>K</variation>
    <location>
        <position position="7"/>
    </location>
</feature>
<feature type="mutagenesis site" description="No effect on channel basal activity." evidence="12">
    <original>T</original>
    <variation>C</variation>
    <variation>K</variation>
    <location>
        <position position="8"/>
    </location>
</feature>
<feature type="mutagenesis site" description="Greatly reduces pH sensitivity." evidence="7">
    <original>H</original>
    <variation>N</variation>
    <location>
        <position position="98"/>
    </location>
</feature>
<feature type="mutagenesis site" description="No effect on channel basal activity." evidence="12">
    <original>E</original>
    <variation>C</variation>
    <location>
        <position position="130"/>
    </location>
</feature>
<feature type="mutagenesis site" description="Increases potassium current amplitude." evidence="12">
    <original>R</original>
    <variation>C</variation>
    <variation>D</variation>
    <variation>E</variation>
    <location>
        <position position="131"/>
    </location>
</feature>
<feature type="mutagenesis site" description="No effect on channel basal activity." evidence="12">
    <original>I</original>
    <variation>C</variation>
    <location>
        <position position="132"/>
    </location>
</feature>
<feature type="mutagenesis site" description="Increases potassium current." evidence="13">
    <original>N</original>
    <variation>A</variation>
    <variation>D</variation>
    <variation>F</variation>
    <variation>Q</variation>
    <variation>T</variation>
    <variation>V</variation>
    <location>
        <position position="133"/>
    </location>
</feature>
<feature type="mutagenesis site" description="Increases potassium current amplitude." evidence="12">
    <original>N</original>
    <variation>C</variation>
    <location>
        <position position="133"/>
    </location>
</feature>
<feature type="mutagenesis site" description="No effect on channel basal activity." evidence="12">
    <original>T</original>
    <variation>C</variation>
    <location>
        <position position="134"/>
    </location>
</feature>
<feature type="mutagenesis site" description="Abolishes voltage gating. Conducts currents with linear I-V relationship characteristic of classical leak channels." evidence="11">
    <original>T</original>
    <variation>C</variation>
    <location>
        <position position="199"/>
    </location>
</feature>
<feature type="mutagenesis site" description="No effect on channel basal activity." evidence="12">
    <original>T</original>
    <variation>A</variation>
    <location>
        <position position="230"/>
    </location>
</feature>
<feature type="mutagenesis site" description="No effect on channel basal activity." evidence="12">
    <original>G</original>
    <variation>A</variation>
    <location>
        <position position="231"/>
    </location>
</feature>
<feature type="mutagenesis site" description="No effect on channel basal activity." evidence="12">
    <original>L</original>
    <variation>A</variation>
    <location>
        <position position="232"/>
    </location>
</feature>
<feature type="mutagenesis site" description="No effect on channel basal activity." evidence="12">
    <original>T</original>
    <variation>A</variation>
    <location>
        <position position="233"/>
    </location>
</feature>
<feature type="mutagenesis site" description="No effect on channel basal activity." evidence="12">
    <original>V</original>
    <variation>A</variation>
    <location>
        <position position="234"/>
    </location>
</feature>
<feature type="mutagenesis site" description="No effect on channel basal activity." evidence="12">
    <original>I</original>
    <variation>A</variation>
    <location>
        <position position="235"/>
    </location>
</feature>
<feature type="mutagenesis site" description="No effect on channel basal activity." evidence="12">
    <original>G</original>
    <variation>A</variation>
    <location>
        <position position="236"/>
    </location>
</feature>
<feature type="mutagenesis site" description="Increases potassium current amplitude." evidence="12">
    <original>A</original>
    <variation>V</variation>
    <location>
        <position position="237"/>
    </location>
</feature>
<feature type="mutagenesis site" description="No effect on channel basal activity." evidence="12">
    <original>F</original>
    <variation>A</variation>
    <location>
        <position position="238"/>
    </location>
</feature>
<feature type="mutagenesis site" description="No effect on channel basal activity." evidence="12">
    <original>L</original>
    <variation>A</variation>
    <location>
        <position position="239"/>
    </location>
</feature>
<feature type="mutagenesis site" description="No effect on channel basal activity." evidence="12">
    <original>N</original>
    <variation>A</variation>
    <location>
        <position position="240"/>
    </location>
</feature>
<feature type="mutagenesis site" description="Increases potassium current amplitude." evidence="12">
    <original>L</original>
    <variation>A</variation>
    <location>
        <position position="241"/>
    </location>
</feature>
<feature type="mutagenesis site" description="No effect on channel basal activity." evidence="12">
    <original>V</original>
    <variation>A</variation>
    <location>
        <position position="242"/>
    </location>
</feature>
<feature type="mutagenesis site" description="No effect on channel basal activity." evidence="12">
    <original>V</original>
    <variation>A</variation>
    <location>
        <position position="243"/>
    </location>
</feature>
<feature type="mutagenesis site" description="Increases potassium current amplitude." evidence="12">
    <original>L</original>
    <variation>A</variation>
    <location>
        <position position="244"/>
    </location>
</feature>
<feature type="mutagenesis site" description="Increases potassium current amplitude." evidence="12">
    <original>R</original>
    <variation>A</variation>
    <location>
        <position position="245"/>
    </location>
</feature>
<feature type="mutagenesis site" description="Increases potassium current amplitude." evidence="12">
    <original>F</original>
    <variation>A</variation>
    <location>
        <position position="246"/>
    </location>
</feature>
<feature type="mutagenesis site" description="Increases potassium current amplitude." evidence="12">
    <original>M</original>
    <variation>A</variation>
    <location>
        <position position="247"/>
    </location>
</feature>
<feature type="mutagenesis site" description="Increases potassium current amplitude." evidence="12">
    <original>T</original>
    <variation>A</variation>
    <location>
        <position position="248"/>
    </location>
</feature>
<feature type="mutagenesis site" description="No effect on channel basal activity." evidence="12">
    <original>M</original>
    <variation>C</variation>
    <location>
        <position position="249"/>
    </location>
</feature>
<feature type="mutagenesis site" description="Increases channel basal activity." evidence="12">
    <original>N</original>
    <variation>C</variation>
    <variation>D</variation>
    <location>
        <position position="250"/>
    </location>
</feature>
<feature type="mutagenesis site" description="No effect on channel basal activity." evidence="12">
    <original>N</original>
    <variation>R</variation>
    <location>
        <position position="250"/>
    </location>
</feature>
<feature type="mutagenesis site" description="No effect on channel basal activity." evidence="12">
    <original>A</original>
    <variation>C</variation>
    <location>
        <position position="251"/>
    </location>
</feature>
<feature type="mutagenesis site" description="No effect on channel basal activity." evidence="12">
    <original>E</original>
    <variation>C</variation>
    <location>
        <position position="252"/>
    </location>
</feature>
<feature type="mutagenesis site" description="No effect on channel basal activity." evidence="12">
    <original>D</original>
    <variation>C</variation>
    <variation>R</variation>
    <location>
        <position position="253"/>
    </location>
</feature>
<feature type="mutagenesis site" description="No effect on channel basal activity." evidence="12">
    <original>E</original>
    <variation>C</variation>
    <variation>R</variation>
    <location>
        <position position="254"/>
    </location>
</feature>
<feature type="mutagenesis site" description="No effect on channel basal activity." evidence="12">
    <original>K</original>
    <variation>C</variation>
    <location>
        <position position="255"/>
    </location>
</feature>
<feature type="mutagenesis site" description="No effect on channel basal activity." evidence="12">
    <original>R</original>
    <variation>C</variation>
    <location>
        <position position="256"/>
    </location>
</feature>
<feature type="mutagenesis site" description="No effect on channel basal activity." evidence="12">
    <original>D</original>
    <variation>C</variation>
    <location>
        <position position="257"/>
    </location>
</feature>
<feature type="helix" evidence="22">
    <location>
        <begin position="3"/>
        <end position="51"/>
    </location>
</feature>
<feature type="helix" evidence="22">
    <location>
        <begin position="56"/>
        <end position="73"/>
    </location>
</feature>
<feature type="helix" evidence="22">
    <location>
        <begin position="80"/>
        <end position="91"/>
    </location>
</feature>
<feature type="helix" evidence="22">
    <location>
        <begin position="104"/>
        <end position="147"/>
    </location>
</feature>
<feature type="helix" evidence="22">
    <location>
        <begin position="156"/>
        <end position="181"/>
    </location>
</feature>
<feature type="helix" evidence="22">
    <location>
        <begin position="186"/>
        <end position="197"/>
    </location>
</feature>
<feature type="strand" evidence="22">
    <location>
        <begin position="203"/>
        <end position="205"/>
    </location>
</feature>
<feature type="helix" evidence="21">
    <location>
        <begin position="210"/>
        <end position="212"/>
    </location>
</feature>
<feature type="helix" evidence="22">
    <location>
        <begin position="213"/>
        <end position="216"/>
    </location>
</feature>
<feature type="helix" evidence="22">
    <location>
        <begin position="218"/>
        <end position="241"/>
    </location>
</feature>
<feature type="helix" evidence="22">
    <location>
        <begin position="244"/>
        <end position="247"/>
    </location>
</feature>
<feature type="helix" evidence="22">
    <location>
        <begin position="249"/>
        <end position="259"/>
    </location>
</feature>
<organism>
    <name type="scientific">Homo sapiens</name>
    <name type="common">Human</name>
    <dbReference type="NCBI Taxonomy" id="9606"/>
    <lineage>
        <taxon>Eukaryota</taxon>
        <taxon>Metazoa</taxon>
        <taxon>Chordata</taxon>
        <taxon>Craniata</taxon>
        <taxon>Vertebrata</taxon>
        <taxon>Euteleostomi</taxon>
        <taxon>Mammalia</taxon>
        <taxon>Eutheria</taxon>
        <taxon>Euarchontoglires</taxon>
        <taxon>Primates</taxon>
        <taxon>Haplorrhini</taxon>
        <taxon>Catarrhini</taxon>
        <taxon>Hominidae</taxon>
        <taxon>Homo</taxon>
    </lineage>
</organism>
<evidence type="ECO:0000250" key="1">
    <source>
        <dbReference type="UniProtKB" id="O35111"/>
    </source>
</evidence>
<evidence type="ECO:0000250" key="2">
    <source>
        <dbReference type="UniProtKB" id="O54912"/>
    </source>
</evidence>
<evidence type="ECO:0000250" key="3">
    <source>
        <dbReference type="UniProtKB" id="P57789"/>
    </source>
</evidence>
<evidence type="ECO:0000255" key="4"/>
<evidence type="ECO:0000256" key="5">
    <source>
        <dbReference type="SAM" id="MobiDB-lite"/>
    </source>
</evidence>
<evidence type="ECO:0000269" key="6">
    <source>
    </source>
</evidence>
<evidence type="ECO:0000269" key="7">
    <source>
    </source>
</evidence>
<evidence type="ECO:0000269" key="8">
    <source>
    </source>
</evidence>
<evidence type="ECO:0000269" key="9">
    <source>
    </source>
</evidence>
<evidence type="ECO:0000269" key="10">
    <source>
    </source>
</evidence>
<evidence type="ECO:0000269" key="11">
    <source>
    </source>
</evidence>
<evidence type="ECO:0000269" key="12">
    <source>
    </source>
</evidence>
<evidence type="ECO:0000269" key="13">
    <source>
    </source>
</evidence>
<evidence type="ECO:0000269" key="14">
    <source>
    </source>
</evidence>
<evidence type="ECO:0000303" key="15">
    <source>
    </source>
</evidence>
<evidence type="ECO:0000305" key="16"/>
<evidence type="ECO:0000305" key="17">
    <source>
    </source>
</evidence>
<evidence type="ECO:0000312" key="18">
    <source>
        <dbReference type="HGNC" id="HGNC:6278"/>
    </source>
</evidence>
<evidence type="ECO:0000312" key="19">
    <source>
        <dbReference type="PDB" id="6RV2"/>
    </source>
</evidence>
<evidence type="ECO:0000312" key="20">
    <source>
        <dbReference type="PDB" id="6RV4"/>
    </source>
</evidence>
<evidence type="ECO:0007829" key="21">
    <source>
        <dbReference type="PDB" id="6RV2"/>
    </source>
</evidence>
<evidence type="ECO:0007829" key="22">
    <source>
        <dbReference type="PDB" id="6RV3"/>
    </source>
</evidence>
<dbReference type="EMBL" id="AF006823">
    <property type="protein sequence ID" value="AAC51777.1"/>
    <property type="molecule type" value="mRNA"/>
</dbReference>
<dbReference type="EMBL" id="AF065163">
    <property type="protein sequence ID" value="AAG29340.1"/>
    <property type="molecule type" value="mRNA"/>
</dbReference>
<dbReference type="EMBL" id="AC015977">
    <property type="protein sequence ID" value="AAY24312.1"/>
    <property type="molecule type" value="Genomic_DNA"/>
</dbReference>
<dbReference type="EMBL" id="CH471053">
    <property type="protein sequence ID" value="EAX00678.1"/>
    <property type="molecule type" value="Genomic_DNA"/>
</dbReference>
<dbReference type="EMBL" id="CH471053">
    <property type="protein sequence ID" value="EAX00679.1"/>
    <property type="molecule type" value="Genomic_DNA"/>
</dbReference>
<dbReference type="CCDS" id="CCDS1727.1"/>
<dbReference type="RefSeq" id="NP_002237.1">
    <property type="nucleotide sequence ID" value="NM_002246.3"/>
</dbReference>
<dbReference type="PDB" id="6RV2">
    <property type="method" value="X-ray"/>
    <property type="resolution" value="3.00 A"/>
    <property type="chains" value="A/B/C/D=1-259"/>
</dbReference>
<dbReference type="PDB" id="6RV3">
    <property type="method" value="X-ray"/>
    <property type="resolution" value="2.90 A"/>
    <property type="chains" value="A/B/C/D=1-259"/>
</dbReference>
<dbReference type="PDB" id="6RV4">
    <property type="method" value="X-ray"/>
    <property type="resolution" value="3.10 A"/>
    <property type="chains" value="A/B/C/D=1-259"/>
</dbReference>
<dbReference type="PDB" id="9G9X">
    <property type="method" value="EM"/>
    <property type="resolution" value="3.13 A"/>
    <property type="chains" value="A/B=1-259"/>
</dbReference>
<dbReference type="PDBsum" id="6RV2"/>
<dbReference type="PDBsum" id="6RV3"/>
<dbReference type="PDBsum" id="6RV4"/>
<dbReference type="PDBsum" id="9G9X"/>
<dbReference type="EMDB" id="EMD-51160"/>
<dbReference type="SMR" id="O14649"/>
<dbReference type="BioGRID" id="109978">
    <property type="interactions" value="5"/>
</dbReference>
<dbReference type="FunCoup" id="O14649">
    <property type="interactions" value="414"/>
</dbReference>
<dbReference type="IntAct" id="O14649">
    <property type="interactions" value="541"/>
</dbReference>
<dbReference type="MINT" id="O14649"/>
<dbReference type="STRING" id="9606.ENSP00000306275"/>
<dbReference type="BindingDB" id="O14649"/>
<dbReference type="ChEMBL" id="CHEMBL2321613"/>
<dbReference type="DrugBank" id="DB00561">
    <property type="generic name" value="Doxapram"/>
</dbReference>
<dbReference type="DrugBank" id="DB01159">
    <property type="generic name" value="Halothane"/>
</dbReference>
<dbReference type="DrugCentral" id="O14649"/>
<dbReference type="GuidetoPHARMACOLOGY" id="515"/>
<dbReference type="TCDB" id="1.A.1.9.2">
    <property type="family name" value="the voltage-gated ion channel (vic) superfamily"/>
</dbReference>
<dbReference type="GlyCosmos" id="O14649">
    <property type="glycosylation" value="1 site, No reported glycans"/>
</dbReference>
<dbReference type="GlyGen" id="O14649">
    <property type="glycosylation" value="1 site"/>
</dbReference>
<dbReference type="iPTMnet" id="O14649"/>
<dbReference type="PhosphoSitePlus" id="O14649"/>
<dbReference type="BioMuta" id="KCNK3"/>
<dbReference type="MassIVE" id="O14649"/>
<dbReference type="PaxDb" id="9606-ENSP00000306275"/>
<dbReference type="PeptideAtlas" id="O14649"/>
<dbReference type="ProteomicsDB" id="48147"/>
<dbReference type="Antibodypedia" id="13387">
    <property type="antibodies" value="233 antibodies from 28 providers"/>
</dbReference>
<dbReference type="DNASU" id="3777"/>
<dbReference type="Ensembl" id="ENST00000302909.4">
    <property type="protein sequence ID" value="ENSP00000306275.3"/>
    <property type="gene ID" value="ENSG00000171303.8"/>
</dbReference>
<dbReference type="GeneID" id="3777"/>
<dbReference type="KEGG" id="hsa:3777"/>
<dbReference type="MANE-Select" id="ENST00000302909.4">
    <property type="protein sequence ID" value="ENSP00000306275.3"/>
    <property type="RefSeq nucleotide sequence ID" value="NM_002246.3"/>
    <property type="RefSeq protein sequence ID" value="NP_002237.1"/>
</dbReference>
<dbReference type="UCSC" id="uc002rhn.3">
    <property type="organism name" value="human"/>
</dbReference>
<dbReference type="AGR" id="HGNC:6278"/>
<dbReference type="CTD" id="3777"/>
<dbReference type="DisGeNET" id="3777"/>
<dbReference type="GeneCards" id="KCNK3"/>
<dbReference type="GeneReviews" id="KCNK3"/>
<dbReference type="HGNC" id="HGNC:6278">
    <property type="gene designation" value="KCNK3"/>
</dbReference>
<dbReference type="HPA" id="ENSG00000171303">
    <property type="expression patterns" value="Tissue enriched (adrenal)"/>
</dbReference>
<dbReference type="MalaCards" id="KCNK3"/>
<dbReference type="MIM" id="603220">
    <property type="type" value="gene"/>
</dbReference>
<dbReference type="MIM" id="615344">
    <property type="type" value="phenotype"/>
</dbReference>
<dbReference type="neXtProt" id="NX_O14649"/>
<dbReference type="OpenTargets" id="ENSG00000171303"/>
<dbReference type="Orphanet" id="275777">
    <property type="disease" value="Heritable pulmonary arterial hypertension"/>
</dbReference>
<dbReference type="PharmGKB" id="PA30060"/>
<dbReference type="VEuPathDB" id="HostDB:ENSG00000171303"/>
<dbReference type="eggNOG" id="KOG4404">
    <property type="taxonomic scope" value="Eukaryota"/>
</dbReference>
<dbReference type="GeneTree" id="ENSGT00940000158248"/>
<dbReference type="HOGENOM" id="CLU_022504_4_0_1"/>
<dbReference type="InParanoid" id="O14649"/>
<dbReference type="OMA" id="QWNFAGS"/>
<dbReference type="OrthoDB" id="297496at2759"/>
<dbReference type="PAN-GO" id="O14649">
    <property type="GO annotations" value="5 GO annotations based on evolutionary models"/>
</dbReference>
<dbReference type="PhylomeDB" id="O14649"/>
<dbReference type="TreeFam" id="TF313947"/>
<dbReference type="PathwayCommons" id="O14649"/>
<dbReference type="Reactome" id="R-HSA-1299316">
    <property type="pathway name" value="TWIK-releated acid-sensitive K+ channel (TASK)"/>
</dbReference>
<dbReference type="Reactome" id="R-HSA-5576886">
    <property type="pathway name" value="Phase 4 - resting membrane potential"/>
</dbReference>
<dbReference type="SignaLink" id="O14649"/>
<dbReference type="SIGNOR" id="O14649"/>
<dbReference type="BioGRID-ORCS" id="3777">
    <property type="hits" value="7 hits in 1153 CRISPR screens"/>
</dbReference>
<dbReference type="ChiTaRS" id="KCNK3">
    <property type="organism name" value="human"/>
</dbReference>
<dbReference type="GeneWiki" id="KCNK3"/>
<dbReference type="GenomeRNAi" id="3777"/>
<dbReference type="Pharos" id="O14649">
    <property type="development level" value="Tclin"/>
</dbReference>
<dbReference type="PRO" id="PR:O14649"/>
<dbReference type="Proteomes" id="UP000005640">
    <property type="component" value="Chromosome 2"/>
</dbReference>
<dbReference type="RNAct" id="O14649">
    <property type="molecule type" value="protein"/>
</dbReference>
<dbReference type="Bgee" id="ENSG00000171303">
    <property type="expression patterns" value="Expressed in left adrenal gland and 144 other cell types or tissues"/>
</dbReference>
<dbReference type="ExpressionAtlas" id="O14649">
    <property type="expression patterns" value="baseline and differential"/>
</dbReference>
<dbReference type="GO" id="GO:0005886">
    <property type="term" value="C:plasma membrane"/>
    <property type="evidence" value="ECO:0000314"/>
    <property type="project" value="UniProtKB"/>
</dbReference>
<dbReference type="GO" id="GO:0045202">
    <property type="term" value="C:synapse"/>
    <property type="evidence" value="ECO:0007669"/>
    <property type="project" value="GOC"/>
</dbReference>
<dbReference type="GO" id="GO:0046872">
    <property type="term" value="F:metal ion binding"/>
    <property type="evidence" value="ECO:0007669"/>
    <property type="project" value="UniProtKB-KW"/>
</dbReference>
<dbReference type="GO" id="GO:0005216">
    <property type="term" value="F:monoatomic ion channel activity"/>
    <property type="evidence" value="ECO:0000315"/>
    <property type="project" value="UniProtKB"/>
</dbReference>
<dbReference type="GO" id="GO:0005252">
    <property type="term" value="F:open rectifier potassium channel activity"/>
    <property type="evidence" value="ECO:0007669"/>
    <property type="project" value="Ensembl"/>
</dbReference>
<dbReference type="GO" id="GO:0015271">
    <property type="term" value="F:outward rectifier potassium channel activity"/>
    <property type="evidence" value="ECO:0000314"/>
    <property type="project" value="UniProtKB"/>
</dbReference>
<dbReference type="GO" id="GO:0005267">
    <property type="term" value="F:potassium channel activity"/>
    <property type="evidence" value="ECO:0000304"/>
    <property type="project" value="ProtInc"/>
</dbReference>
<dbReference type="GO" id="GO:0022841">
    <property type="term" value="F:potassium ion leak channel activity"/>
    <property type="evidence" value="ECO:0000314"/>
    <property type="project" value="UniProtKB"/>
</dbReference>
<dbReference type="GO" id="GO:0046982">
    <property type="term" value="F:protein heterodimerization activity"/>
    <property type="evidence" value="ECO:0000314"/>
    <property type="project" value="UniProtKB"/>
</dbReference>
<dbReference type="GO" id="GO:0044548">
    <property type="term" value="F:S100 protein binding"/>
    <property type="evidence" value="ECO:0000353"/>
    <property type="project" value="UniProtKB"/>
</dbReference>
<dbReference type="GO" id="GO:0005272">
    <property type="term" value="F:sodium channel activity"/>
    <property type="evidence" value="ECO:0000314"/>
    <property type="project" value="UniProtKB"/>
</dbReference>
<dbReference type="GO" id="GO:0071468">
    <property type="term" value="P:cellular response to acidic pH"/>
    <property type="evidence" value="ECO:0000314"/>
    <property type="project" value="UniProtKB"/>
</dbReference>
<dbReference type="GO" id="GO:0071456">
    <property type="term" value="P:cellular response to hypoxia"/>
    <property type="evidence" value="ECO:0007669"/>
    <property type="project" value="Ensembl"/>
</dbReference>
<dbReference type="GO" id="GO:0071294">
    <property type="term" value="P:cellular response to zinc ion"/>
    <property type="evidence" value="ECO:0007669"/>
    <property type="project" value="Ensembl"/>
</dbReference>
<dbReference type="GO" id="GO:0007268">
    <property type="term" value="P:chemical synaptic transmission"/>
    <property type="evidence" value="ECO:0000304"/>
    <property type="project" value="ProtInc"/>
</dbReference>
<dbReference type="GO" id="GO:0090102">
    <property type="term" value="P:cochlea development"/>
    <property type="evidence" value="ECO:0007669"/>
    <property type="project" value="Ensembl"/>
</dbReference>
<dbReference type="GO" id="GO:0003029">
    <property type="term" value="P:detection of hypoxic conditions in blood by carotid body chemoreceptor signaling"/>
    <property type="evidence" value="ECO:0000250"/>
    <property type="project" value="UniProtKB"/>
</dbReference>
<dbReference type="GO" id="GO:0034220">
    <property type="term" value="P:monoatomic ion transmembrane transport"/>
    <property type="evidence" value="ECO:0000315"/>
    <property type="project" value="UniProtKB"/>
</dbReference>
<dbReference type="GO" id="GO:0051481">
    <property type="term" value="P:negative regulation of cytosolic calcium ion concentration"/>
    <property type="evidence" value="ECO:0007669"/>
    <property type="project" value="Ensembl"/>
</dbReference>
<dbReference type="GO" id="GO:0071805">
    <property type="term" value="P:potassium ion transmembrane transport"/>
    <property type="evidence" value="ECO:0000318"/>
    <property type="project" value="GO_Central"/>
</dbReference>
<dbReference type="GO" id="GO:0006813">
    <property type="term" value="P:potassium ion transport"/>
    <property type="evidence" value="ECO:0000304"/>
    <property type="project" value="ProtInc"/>
</dbReference>
<dbReference type="GO" id="GO:0099605">
    <property type="term" value="P:regulation of action potential firing rate"/>
    <property type="evidence" value="ECO:0007669"/>
    <property type="project" value="Ensembl"/>
</dbReference>
<dbReference type="GO" id="GO:0060075">
    <property type="term" value="P:regulation of resting membrane potential"/>
    <property type="evidence" value="ECO:0007669"/>
    <property type="project" value="Ensembl"/>
</dbReference>
<dbReference type="GO" id="GO:0009410">
    <property type="term" value="P:response to xenobiotic stimulus"/>
    <property type="evidence" value="ECO:0007669"/>
    <property type="project" value="Ensembl"/>
</dbReference>
<dbReference type="FunFam" id="1.10.287.70:FF:000057">
    <property type="entry name" value="Potassium channel subfamily K member"/>
    <property type="match status" value="1"/>
</dbReference>
<dbReference type="Gene3D" id="1.10.287.70">
    <property type="match status" value="1"/>
</dbReference>
<dbReference type="InterPro" id="IPR003280">
    <property type="entry name" value="2pore_dom_K_chnl"/>
</dbReference>
<dbReference type="InterPro" id="IPR003092">
    <property type="entry name" value="2pore_dom_K_chnl_TASK"/>
</dbReference>
<dbReference type="InterPro" id="IPR013099">
    <property type="entry name" value="K_chnl_dom"/>
</dbReference>
<dbReference type="InterPro" id="IPR005406">
    <property type="entry name" value="KCNK3"/>
</dbReference>
<dbReference type="PANTHER" id="PTHR11003:SF138">
    <property type="entry name" value="POTASSIUM CHANNEL SUBFAMILY K MEMBER 3"/>
    <property type="match status" value="1"/>
</dbReference>
<dbReference type="PANTHER" id="PTHR11003">
    <property type="entry name" value="POTASSIUM CHANNEL, SUBFAMILY K"/>
    <property type="match status" value="1"/>
</dbReference>
<dbReference type="Pfam" id="PF07885">
    <property type="entry name" value="Ion_trans_2"/>
    <property type="match status" value="2"/>
</dbReference>
<dbReference type="PIRSF" id="PIRSF038061">
    <property type="entry name" value="K_channel_subfamily_K_type"/>
    <property type="match status" value="1"/>
</dbReference>
<dbReference type="PRINTS" id="PR01333">
    <property type="entry name" value="2POREKCHANEL"/>
</dbReference>
<dbReference type="PRINTS" id="PR01584">
    <property type="entry name" value="TASK1CHANNEL"/>
</dbReference>
<dbReference type="PRINTS" id="PR01095">
    <property type="entry name" value="TASKCHANNEL"/>
</dbReference>
<dbReference type="SUPFAM" id="SSF81324">
    <property type="entry name" value="Voltage-gated potassium channels"/>
    <property type="match status" value="2"/>
</dbReference>
<gene>
    <name evidence="15 18" type="primary">KCNK3</name>
    <name type="synonym">TASK</name>
    <name type="synonym">TASK1</name>
</gene>
<sequence length="394" mass="43518">MKRQNVRTLALIVCTFTYLLVGAAVFDALESEPELIERQRLELRQQELRARYNLSQGGYEELERVVLRLKPHKAGVQWRFAGSFYFAITVITTIGYGHAAPSTDGGKVFCMFYALLGIPLTLVMFQSLGERINTLVRYLLHRAKKGLGMRRADVSMANMVLIGFFSCISTLCIGAAAFSHYEHWTFFQAYYYCFITLTTIGFGDYVALQKDQALQTQPQYVAFSFVYILTGLTVIGAFLNLVVLRFMTMNAEDEKRDAEHRALLTRNGQAGGGGGGGSAHTTDTASSTAAAGGGGFRNVYAEVLHFQSMCSCLWYKSREKLQYSIPMIIPRDLSTSDTCVEQSHSSPGGGGRYSDTPSRRCLCSGAPRSAISSVSTGLHSLSTFRGLMKRRSSV</sequence>
<reference key="1">
    <citation type="journal article" date="1997" name="EMBO J.">
        <title>TASK, a human background K+ channel to sense external pH variations near physiological pH.</title>
        <authorList>
            <person name="Duprat F."/>
            <person name="Lesage F."/>
            <person name="Fink M."/>
            <person name="Reyes R."/>
            <person name="Heurteaux C."/>
            <person name="Lazdunski M."/>
        </authorList>
    </citation>
    <scope>NUCLEOTIDE SEQUENCE [MRNA]</scope>
    <scope>FUNCTION</scope>
    <scope>TRANSPORTER ACTIVITY</scope>
    <scope>ACTIVITY REGULATION</scope>
    <source>
        <tissue>Kidney</tissue>
    </source>
</reference>
<reference key="2">
    <citation type="journal article" date="2000" name="J. Biol. Chem.">
        <title>Proton block and voltage gating are potassium-dependent in the cardiac leak channel Kcnk3.</title>
        <authorList>
            <person name="Lopes C.M.B."/>
            <person name="Gallagher P.G."/>
            <person name="Buck M.E."/>
            <person name="Butler M.H."/>
            <person name="Goldstein S.A.N."/>
        </authorList>
    </citation>
    <scope>NUCLEOTIDE SEQUENCE [MRNA]</scope>
    <source>
        <tissue>Heart</tissue>
    </source>
</reference>
<reference key="3">
    <citation type="journal article" date="2005" name="Nature">
        <title>Generation and annotation of the DNA sequences of human chromosomes 2 and 4.</title>
        <authorList>
            <person name="Hillier L.W."/>
            <person name="Graves T.A."/>
            <person name="Fulton R.S."/>
            <person name="Fulton L.A."/>
            <person name="Pepin K.H."/>
            <person name="Minx P."/>
            <person name="Wagner-McPherson C."/>
            <person name="Layman D."/>
            <person name="Wylie K."/>
            <person name="Sekhon M."/>
            <person name="Becker M.C."/>
            <person name="Fewell G.A."/>
            <person name="Delehaunty K.D."/>
            <person name="Miner T.L."/>
            <person name="Nash W.E."/>
            <person name="Kremitzki C."/>
            <person name="Oddy L."/>
            <person name="Du H."/>
            <person name="Sun H."/>
            <person name="Bradshaw-Cordum H."/>
            <person name="Ali J."/>
            <person name="Carter J."/>
            <person name="Cordes M."/>
            <person name="Harris A."/>
            <person name="Isak A."/>
            <person name="van Brunt A."/>
            <person name="Nguyen C."/>
            <person name="Du F."/>
            <person name="Courtney L."/>
            <person name="Kalicki J."/>
            <person name="Ozersky P."/>
            <person name="Abbott S."/>
            <person name="Armstrong J."/>
            <person name="Belter E.A."/>
            <person name="Caruso L."/>
            <person name="Cedroni M."/>
            <person name="Cotton M."/>
            <person name="Davidson T."/>
            <person name="Desai A."/>
            <person name="Elliott G."/>
            <person name="Erb T."/>
            <person name="Fronick C."/>
            <person name="Gaige T."/>
            <person name="Haakenson W."/>
            <person name="Haglund K."/>
            <person name="Holmes A."/>
            <person name="Harkins R."/>
            <person name="Kim K."/>
            <person name="Kruchowski S.S."/>
            <person name="Strong C.M."/>
            <person name="Grewal N."/>
            <person name="Goyea E."/>
            <person name="Hou S."/>
            <person name="Levy A."/>
            <person name="Martinka S."/>
            <person name="Mead K."/>
            <person name="McLellan M.D."/>
            <person name="Meyer R."/>
            <person name="Randall-Maher J."/>
            <person name="Tomlinson C."/>
            <person name="Dauphin-Kohlberg S."/>
            <person name="Kozlowicz-Reilly A."/>
            <person name="Shah N."/>
            <person name="Swearengen-Shahid S."/>
            <person name="Snider J."/>
            <person name="Strong J.T."/>
            <person name="Thompson J."/>
            <person name="Yoakum M."/>
            <person name="Leonard S."/>
            <person name="Pearman C."/>
            <person name="Trani L."/>
            <person name="Radionenko M."/>
            <person name="Waligorski J.E."/>
            <person name="Wang C."/>
            <person name="Rock S.M."/>
            <person name="Tin-Wollam A.-M."/>
            <person name="Maupin R."/>
            <person name="Latreille P."/>
            <person name="Wendl M.C."/>
            <person name="Yang S.-P."/>
            <person name="Pohl C."/>
            <person name="Wallis J.W."/>
            <person name="Spieth J."/>
            <person name="Bieri T.A."/>
            <person name="Berkowicz N."/>
            <person name="Nelson J.O."/>
            <person name="Osborne J."/>
            <person name="Ding L."/>
            <person name="Meyer R."/>
            <person name="Sabo A."/>
            <person name="Shotland Y."/>
            <person name="Sinha P."/>
            <person name="Wohldmann P.E."/>
            <person name="Cook L.L."/>
            <person name="Hickenbotham M.T."/>
            <person name="Eldred J."/>
            <person name="Williams D."/>
            <person name="Jones T.A."/>
            <person name="She X."/>
            <person name="Ciccarelli F.D."/>
            <person name="Izaurralde E."/>
            <person name="Taylor J."/>
            <person name="Schmutz J."/>
            <person name="Myers R.M."/>
            <person name="Cox D.R."/>
            <person name="Huang X."/>
            <person name="McPherson J.D."/>
            <person name="Mardis E.R."/>
            <person name="Clifton S.W."/>
            <person name="Warren W.C."/>
            <person name="Chinwalla A.T."/>
            <person name="Eddy S.R."/>
            <person name="Marra M.A."/>
            <person name="Ovcharenko I."/>
            <person name="Furey T.S."/>
            <person name="Miller W."/>
            <person name="Eichler E.E."/>
            <person name="Bork P."/>
            <person name="Suyama M."/>
            <person name="Torrents D."/>
            <person name="Waterston R.H."/>
            <person name="Wilson R.K."/>
        </authorList>
    </citation>
    <scope>NUCLEOTIDE SEQUENCE [LARGE SCALE GENOMIC DNA]</scope>
</reference>
<reference key="4">
    <citation type="submission" date="2005-09" db="EMBL/GenBank/DDBJ databases">
        <authorList>
            <person name="Mural R.J."/>
            <person name="Istrail S."/>
            <person name="Sutton G.G."/>
            <person name="Florea L."/>
            <person name="Halpern A.L."/>
            <person name="Mobarry C.M."/>
            <person name="Lippert R."/>
            <person name="Walenz B."/>
            <person name="Shatkay H."/>
            <person name="Dew I."/>
            <person name="Miller J.R."/>
            <person name="Flanigan M.J."/>
            <person name="Edwards N.J."/>
            <person name="Bolanos R."/>
            <person name="Fasulo D."/>
            <person name="Halldorsson B.V."/>
            <person name="Hannenhalli S."/>
            <person name="Turner R."/>
            <person name="Yooseph S."/>
            <person name="Lu F."/>
            <person name="Nusskern D.R."/>
            <person name="Shue B.C."/>
            <person name="Zheng X.H."/>
            <person name="Zhong F."/>
            <person name="Delcher A.L."/>
            <person name="Huson D.H."/>
            <person name="Kravitz S.A."/>
            <person name="Mouchard L."/>
            <person name="Reinert K."/>
            <person name="Remington K.A."/>
            <person name="Clark A.G."/>
            <person name="Waterman M.S."/>
            <person name="Eichler E.E."/>
            <person name="Adams M.D."/>
            <person name="Hunkapiller M.W."/>
            <person name="Myers E.W."/>
            <person name="Venter J.C."/>
        </authorList>
    </citation>
    <scope>NUCLEOTIDE SEQUENCE [LARGE SCALE GENOMIC DNA]</scope>
</reference>
<reference key="5">
    <citation type="journal article" date="1999" name="Nat. Neurosci.">
        <title>Inhalational anesthetics activate two-pore-domain background K+ channels.</title>
        <authorList>
            <person name="Patel A.J."/>
            <person name="Honore E."/>
            <person name="Lesage F."/>
            <person name="Fink M."/>
            <person name="Romey G."/>
            <person name="Lazdunski M."/>
        </authorList>
    </citation>
    <scope>ACTIVITY REGULATION</scope>
</reference>
<reference key="6">
    <citation type="journal article" date="2001" name="Pflugers Arch.">
        <title>TASK-5, a novel member of the tandem pore K+ channel family.</title>
        <authorList>
            <person name="Ashmole I."/>
            <person name="Goodwin P.A."/>
            <person name="Stanfield P.R."/>
        </authorList>
    </citation>
    <scope>MUTAGENESIS OF HIS-98</scope>
</reference>
<reference key="7">
    <citation type="journal article" date="2012" name="Sci. Signal.">
        <title>SUMOylation silences heterodimeric TASK potassium channels containing K2P1 subunits in cerebellar granule neurons.</title>
        <authorList>
            <person name="Plant L.D."/>
            <person name="Zuniga L."/>
            <person name="Araki D."/>
            <person name="Marks J.D."/>
            <person name="Goldstein S.A."/>
        </authorList>
    </citation>
    <scope>INTERACTION WITH KCNK1</scope>
    <scope>FUNCTION</scope>
    <scope>SUBCELLULAR LOCATION</scope>
</reference>
<reference key="8">
    <citation type="journal article" date="2012" name="J. Biol. Chem.">
        <title>Acid-sensitive TWIK and TASK two-pore domain potassium channels change ion selectivity and become permeable to sodium in extracellular acidification.</title>
        <authorList>
            <person name="Ma L."/>
            <person name="Zhang X."/>
            <person name="Zhou M."/>
            <person name="Chen H."/>
        </authorList>
    </citation>
    <scope>FUNCTION</scope>
    <scope>TRANSPORTER ACTIVITY</scope>
</reference>
<reference key="9">
    <citation type="journal article" date="2016" name="Cell">
        <title>A Non-canonical Voltage-Sensing Mechanism Controls Gating in K2P K(+) Channels.</title>
        <authorList>
            <person name="Schewe M."/>
            <person name="Nematian-Ardestani E."/>
            <person name="Sun H."/>
            <person name="Musinszki M."/>
            <person name="Cordeiro S."/>
            <person name="Bucci G."/>
            <person name="de Groot B.L."/>
            <person name="Tucker S.J."/>
            <person name="Rapedius M."/>
            <person name="Baukrowitz T."/>
        </authorList>
    </citation>
    <scope>FUNCTION</scope>
    <scope>TRANSPORTER ACTIVITY</scope>
    <scope>REACTION MECHANISM</scope>
    <scope>DOMAIN</scope>
    <scope>MUTAGENESIS OF THR-199</scope>
</reference>
<reference key="10">
    <citation type="journal article" date="2020" name="Nature">
        <title>A lower X-gate in TASK channels traps inhibitors within the vestibule.</title>
        <authorList>
            <person name="Rodstrom K.E.J."/>
            <person name="Kiper A.K."/>
            <person name="Zhang W."/>
            <person name="Rinne S."/>
            <person name="Pike A.C.W."/>
            <person name="Goldstein M."/>
            <person name="Conrad L.J."/>
            <person name="Delbeck M."/>
            <person name="Hahn M.G."/>
            <person name="Meier H."/>
            <person name="Platzk M."/>
            <person name="Quigley A."/>
            <person name="Speedman D."/>
            <person name="Shrestha L."/>
            <person name="Mukhopadhyay S.M.M."/>
            <person name="Burgess-Brown N.A."/>
            <person name="Tucker S.J."/>
            <person name="Muller T."/>
            <person name="Decher N."/>
            <person name="Carpenter E.P."/>
        </authorList>
    </citation>
    <scope>X-RAY CRYSTALLOGRAPHY (2.90 ANGSTROMS) OF 1-259 IN COMPLEX WITH POTASSIUM IONS</scope>
    <scope>DOMAIN</scope>
    <scope>SUBUNIT</scope>
    <scope>FUNCTION</scope>
    <scope>TRANSPORTER ACTIVITY</scope>
    <scope>MUTAGENESIS OF GLN-4; ASN-5; VAL-6; ARG-7; THR-8; GLU-130; ARG-131; ILE-132; ASN-133; THR-134; THR-230; GLY-231; LEU-232; THR-233; VAL-234; ILE-235; GLY-236; ALA-237; PHE-238; LEU-239; ASN-240; LEU-241; VAL-242; VAL-243; LEU-244; ARG-245; PHE-246; MET-247; THR-248; MET-249; ASN-250; ALA-251; GLU-252; ASP-253; GLU-254; LYS-255; ARG-256 AND ASP-257</scope>
</reference>
<reference key="11">
    <citation type="journal article" date="2013" name="N. Engl. J. Med.">
        <title>A novel channelopathy in pulmonary arterial hypertension.</title>
        <authorList>
            <person name="Ma L."/>
            <person name="Roman-Campos D."/>
            <person name="Austin E.D."/>
            <person name="Eyries M."/>
            <person name="Sampson K.S."/>
            <person name="Soubrier F."/>
            <person name="Germain M."/>
            <person name="Tregouet D.A."/>
            <person name="Borczuk A."/>
            <person name="Rosenzweig E.B."/>
            <person name="Girerd B."/>
            <person name="Montani D."/>
            <person name="Humbert M."/>
            <person name="Loyd J.E."/>
            <person name="Kass R.S."/>
            <person name="Chung W.K."/>
        </authorList>
    </citation>
    <scope>INVOLVEMENT IN PPH4</scope>
    <scope>VARIANTS PPH4 LYS-8; ARG-97; LYS-182; CYS-192; ASP-203 AND LEU-221</scope>
    <scope>CHARACTERIZATION OF VARIANTS PPH4 LYS-8; ARG-97; LYS-182; CYS-192; ASP-203 AND LEU-221</scope>
</reference>
<reference key="12">
    <citation type="journal article" date="2022" name="Nat. Genet.">
        <title>Gain-of-function mutations in KCNK3 cause a developmental disorder with sleep apnea.</title>
        <authorList>
            <person name="Soermann J."/>
            <person name="Schewe M."/>
            <person name="Proks P."/>
            <person name="Jouen-Tachoire T."/>
            <person name="Rao S."/>
            <person name="Riel E.B."/>
            <person name="Agre K.E."/>
            <person name="Begtrup A."/>
            <person name="Dean J."/>
            <person name="Descartes M."/>
            <person name="Fischer J."/>
            <person name="Gardham A."/>
            <person name="Lahner C."/>
            <person name="Mark P.R."/>
            <person name="Muppidi S."/>
            <person name="Pichurin P.N."/>
            <person name="Porrmann J."/>
            <person name="Schallner J."/>
            <person name="Smith K."/>
            <person name="Straub V."/>
            <person name="Vasudevan P."/>
            <person name="Willaert R."/>
            <person name="Carpenter E.P."/>
            <person name="Roedstroem K.E.J."/>
            <person name="Hahn M.G."/>
            <person name="Mueller T."/>
            <person name="Baukrowitz T."/>
            <person name="Hurles M.E."/>
            <person name="Wright C.F."/>
            <person name="Tucker S.J."/>
        </authorList>
    </citation>
    <scope>INVOLVEMENT IN DDSA</scope>
    <scope>VARIANTS VAL-122; PRO-122; ASP-129; SER-133; GLN-141; PRO-239 AND PHE-241</scope>
    <scope>CHARACTERIZATION OF VARIANTS VAL-122; PRO-122; ASP-129; SER-133; GLN-141; PRO-239 AND PHE-241</scope>
    <scope>FUNCTION</scope>
    <scope>TRANSPORTER ACTIVITY</scope>
    <scope>ACTIVITY REGULATION</scope>
    <scope>MUTAGENESIS OF ASN-133</scope>
</reference>
<comment type="function">
    <text evidence="1 2 8 9 11 12 13 14">K(+) channel that conducts voltage-dependent outward rectifying currents upon membrane depolarization. Voltage sensing is coupled to K(+) electrochemical gradient in an 'ion flux gating' mode where outward but not inward ion flow opens the gate (PubMed:23169818, PubMed:26919430, PubMed:32499642, PubMed:36195757, PubMed:9312005). Changes ion selectivity and becomes permeable to Na(+) ions in response to extracellular acidification. Protonation of the pH sensor His-98 stabilizes C-type inactivation conformation likely converting the channel from outward K(+)-conducting, to inward Na(+)-conducting to nonconductive state (PubMed:22948150). Homo- and heterodimerizes to form functional channels with distinct regulatory and gating properties (PubMed:23169818, PubMed:32499642). Allows K(+) currents with fast-gating kinetics important for the repolarization and hyperpolarization phases of action potentials (By similarity). In cerebellar granule cells, heteromeric KCNK3:KCNK9 channel may hyperpolarize the resting membrane potential to limit intrinsic neuronal excitability, but once the action potential threshold is reached, it may support high-frequency action potential firing and increased neuronal excitability (By similarity). Dispensable for central chemosensory respiration i.e. breathing controlled by brainstem CO2/pH, it rather conducts pH-sensitive currents and controls the firing rate of serotonergic raphe neurons involved in potentiation of the respiratory chemoreflex. Additionally, imparts chemosensitivity to type 1 cells in carotid bodies which respond to a decrease in arterial oxygen pressure or an increase in carbon dioxide pressure or pH to initiate adaptive changes in pulmonary ventilation (By similarity). In adrenal gland, contributes to the maintenance of a hyperpolarized resting membrane potential of aldosterone-producing cells at zona glomerulosa and limits aldosterone release as part of a regulatory mechanism that controls arterial blood pressure and electrolyte homeostasis (By similarity). In brown adipocytes, mediates K(+) efflux that counteracts norepinephrine-induced membrane depolarization, limits Ca(2+) efflux and downstream cAMP and PKA signaling, ultimately attenuating lipid oxidation and adaptive thermogenesis (By similarity).</text>
</comment>
<comment type="catalytic activity">
    <reaction evidence="11 12 13 14">
        <text>K(+)(in) = K(+)(out)</text>
        <dbReference type="Rhea" id="RHEA:29463"/>
        <dbReference type="ChEBI" id="CHEBI:29103"/>
    </reaction>
</comment>
<comment type="catalytic activity">
    <reaction evidence="8">
        <text>Na(+)(in) = Na(+)(out)</text>
        <dbReference type="Rhea" id="RHEA:34963"/>
        <dbReference type="ChEBI" id="CHEBI:29101"/>
    </reaction>
</comment>
<comment type="activity regulation">
    <text evidence="6 13 14">Inhibited by external acidification, diacylglycerol and anandamide. Activated by halothane and isoflurane.</text>
</comment>
<comment type="subunit">
    <text evidence="2 9 12">Homodimer (PubMed:32499642). Heterodimer with KCNK1 (PubMed:23169818). Heterodimer with KCNK9 (By similarity).</text>
</comment>
<comment type="subcellular location">
    <subcellularLocation>
        <location evidence="9">Cell membrane</location>
        <topology evidence="4">Multi-pass membrane protein</topology>
    </subcellularLocation>
</comment>
<comment type="tissue specificity">
    <text>Widespread expression in adult. Strongest expression in pancreas and placenta. Lower expression in brain, lung, prostate, heart, kidney, uterus, small intestine and colon.</text>
</comment>
<comment type="domain">
    <text evidence="11">Each subunit contributes two pore-forming domains 1 and 2 which assemble to form a single pore with M2 and M4 transmembrane helices lining the central cavity and M1 and M3 facing the lipid bilayer. The transmembrane helices are bridged by the selectivity filters 1 and 2 carrying a signature sequence TxTTxG(Y/F)G(D/H) that coordinate the permeant ions. Up to four ions can simultaneously occupy the selectivity filter and at least two elementary charges must translocate across the filter to convert it into the open conformation.</text>
</comment>
<comment type="domain">
    <text evidence="12">The X-gate is positioned at the distal ends of M4 transmembrane helices forming a two-turn-helical structure with the methyl group of Thr-248 closing the ion conduction pathway.</text>
</comment>
<comment type="disease" evidence="10">
    <disease id="DI-03837">
        <name>Pulmonary hypertension, primary, 4</name>
        <acronym>PPH4</acronym>
        <description>A rare disorder characterized by plexiform lesions of proliferating endothelial cells in pulmonary arterioles. The lesions lead to elevated pulmonary arterial pression, right ventricular failure, and death. The disease can occur from infancy throughout life and it has a mean age at onset of 36 years. Penetrance is reduced. Although familial pulmonary hypertension is rare, cases secondary to known etiologies are more common and include those associated with the appetite-suppressant drugs.</description>
        <dbReference type="MIM" id="615344"/>
    </disease>
    <text>The disease is caused by variants affecting the gene represented in this entry.</text>
</comment>
<comment type="disease">
    <text evidence="13">Defects in this gene may cause developmental delay with sleep apnea (DDSA). A disorder characterized by developmental neurologic, skeletal and respiratory anomalies including microcephaly, arthrogryposis, scoliosis, cleft palate, facial dysmorphology, bilateral talipes, feeding difficulties and central and/or obstructive sleep apnea. Malformations are detected as early as 21 weeks post gestation. Severely affected patients require ongoing treatment with nocturnal O2 or pressure-controlled ventilation. The disease is associated with recurrent de novo gain of function variants.</text>
</comment>
<comment type="similarity">
    <text evidence="16">Belongs to the two pore domain potassium channel (TC 1.A.1.8) family.</text>
</comment>
<protein>
    <recommendedName>
        <fullName>Potassium channel subfamily K member 3</fullName>
    </recommendedName>
    <alternativeName>
        <fullName>Acid-sensitive potassium channel protein TASK-1</fullName>
    </alternativeName>
    <alternativeName>
        <fullName>TWIK-related acid-sensitive K(+) channel 1</fullName>
    </alternativeName>
    <alternativeName>
        <fullName>Two pore potassium channel KT3.1</fullName>
        <shortName>Two pore K(+) channel KT3.1</shortName>
    </alternativeName>
</protein>
<accession>O14649</accession>
<accession>Q53SU2</accession>
<proteinExistence type="evidence at protein level"/>
<keyword id="KW-0002">3D-structure</keyword>
<keyword id="KW-1003">Cell membrane</keyword>
<keyword id="KW-0225">Disease variant</keyword>
<keyword id="KW-0325">Glycoprotein</keyword>
<keyword id="KW-0407">Ion channel</keyword>
<keyword id="KW-0406">Ion transport</keyword>
<keyword id="KW-0472">Membrane</keyword>
<keyword id="KW-0479">Metal-binding</keyword>
<keyword id="KW-0630">Potassium</keyword>
<keyword id="KW-0631">Potassium channel</keyword>
<keyword id="KW-0633">Potassium transport</keyword>
<keyword id="KW-1267">Proteomics identification</keyword>
<keyword id="KW-1185">Reference proteome</keyword>
<keyword id="KW-0915">Sodium</keyword>
<keyword id="KW-0894">Sodium channel</keyword>
<keyword id="KW-0739">Sodium transport</keyword>
<keyword id="KW-0812">Transmembrane</keyword>
<keyword id="KW-1133">Transmembrane helix</keyword>
<keyword id="KW-0813">Transport</keyword>
<name>KCNK3_HUMAN</name>